<proteinExistence type="inferred from homology"/>
<keyword id="KW-0238">DNA-binding</keyword>
<keyword id="KW-0539">Nucleus</keyword>
<keyword id="KW-1185">Reference proteome</keyword>
<feature type="chain" id="PRO_0000048784" description="SRY-related protein CH31">
    <location>
        <begin position="1" status="less than"/>
        <end position="54" status="greater than"/>
    </location>
</feature>
<feature type="DNA-binding region" description="HMG box" evidence="1">
    <location>
        <begin position="1" status="less than"/>
        <end position="54" status="greater than"/>
    </location>
</feature>
<feature type="non-terminal residue">
    <location>
        <position position="1"/>
    </location>
</feature>
<feature type="non-terminal residue">
    <location>
        <position position="54"/>
    </location>
</feature>
<name>CH31_CHICK</name>
<sequence length="54" mass="6549">MAQENPKMHNSEISKRLGAEWKLLSEAEKRPFIDEAKRLRAMHMKEYPNYKYRP</sequence>
<protein>
    <recommendedName>
        <fullName>SRY-related protein CH31</fullName>
    </recommendedName>
</protein>
<accession>P40670</accession>
<organism>
    <name type="scientific">Gallus gallus</name>
    <name type="common">Chicken</name>
    <dbReference type="NCBI Taxonomy" id="9031"/>
    <lineage>
        <taxon>Eukaryota</taxon>
        <taxon>Metazoa</taxon>
        <taxon>Chordata</taxon>
        <taxon>Craniata</taxon>
        <taxon>Vertebrata</taxon>
        <taxon>Euteleostomi</taxon>
        <taxon>Archelosauria</taxon>
        <taxon>Archosauria</taxon>
        <taxon>Dinosauria</taxon>
        <taxon>Saurischia</taxon>
        <taxon>Theropoda</taxon>
        <taxon>Coelurosauria</taxon>
        <taxon>Aves</taxon>
        <taxon>Neognathae</taxon>
        <taxon>Galloanserae</taxon>
        <taxon>Galliformes</taxon>
        <taxon>Phasianidae</taxon>
        <taxon>Phasianinae</taxon>
        <taxon>Gallus</taxon>
    </lineage>
</organism>
<evidence type="ECO:0000255" key="1">
    <source>
        <dbReference type="PROSITE-ProRule" id="PRU00267"/>
    </source>
</evidence>
<dbReference type="EMBL" id="M86323">
    <property type="protein sequence ID" value="AAA48679.1"/>
    <property type="molecule type" value="Genomic_DNA"/>
</dbReference>
<dbReference type="PIR" id="I50192">
    <property type="entry name" value="I50192"/>
</dbReference>
<dbReference type="SMR" id="P40670"/>
<dbReference type="FunCoup" id="P40670">
    <property type="interactions" value="6"/>
</dbReference>
<dbReference type="VEuPathDB" id="HostDB:geneid_396105"/>
<dbReference type="InParanoid" id="P40670"/>
<dbReference type="Proteomes" id="UP000000539">
    <property type="component" value="Unassembled WGS sequence"/>
</dbReference>
<dbReference type="GO" id="GO:0005634">
    <property type="term" value="C:nucleus"/>
    <property type="evidence" value="ECO:0007669"/>
    <property type="project" value="UniProtKB-SubCell"/>
</dbReference>
<dbReference type="GO" id="GO:0003677">
    <property type="term" value="F:DNA binding"/>
    <property type="evidence" value="ECO:0007669"/>
    <property type="project" value="UniProtKB-KW"/>
</dbReference>
<dbReference type="FunFam" id="1.10.30.10:FF:000074">
    <property type="entry name" value="SRY-related protein AMA1"/>
    <property type="match status" value="1"/>
</dbReference>
<dbReference type="Gene3D" id="1.10.30.10">
    <property type="entry name" value="High mobility group box domain"/>
    <property type="match status" value="1"/>
</dbReference>
<dbReference type="InterPro" id="IPR009071">
    <property type="entry name" value="HMG_box_dom"/>
</dbReference>
<dbReference type="InterPro" id="IPR036910">
    <property type="entry name" value="HMG_box_dom_sf"/>
</dbReference>
<dbReference type="InterPro" id="IPR050140">
    <property type="entry name" value="SRY-related_HMG-box_TF-like"/>
</dbReference>
<dbReference type="PANTHER" id="PTHR10270:SF324">
    <property type="entry name" value="SOX DOMAIN-CONTAINING PROTEIN DICHAETE-RELATED"/>
    <property type="match status" value="1"/>
</dbReference>
<dbReference type="PANTHER" id="PTHR10270">
    <property type="entry name" value="SOX TRANSCRIPTION FACTOR"/>
    <property type="match status" value="1"/>
</dbReference>
<dbReference type="Pfam" id="PF00505">
    <property type="entry name" value="HMG_box"/>
    <property type="match status" value="1"/>
</dbReference>
<dbReference type="SMART" id="SM00398">
    <property type="entry name" value="HMG"/>
    <property type="match status" value="1"/>
</dbReference>
<dbReference type="SUPFAM" id="SSF47095">
    <property type="entry name" value="HMG-box"/>
    <property type="match status" value="1"/>
</dbReference>
<dbReference type="PROSITE" id="PS50118">
    <property type="entry name" value="HMG_BOX_2"/>
    <property type="match status" value="1"/>
</dbReference>
<reference key="1">
    <citation type="journal article" date="1993" name="PCR Methods Appl.">
        <title>PCR amplification of SRY-related gene sequences reveals evolutionary conservation of the SRY-box motif.</title>
        <authorList>
            <person name="Coriat A.M."/>
            <person name="Mueller U."/>
            <person name="Harry J.L."/>
            <person name="Uwanogho D."/>
            <person name="Sharpe P.T."/>
        </authorList>
    </citation>
    <scope>NUCLEOTIDE SEQUENCE [GENOMIC DNA]</scope>
    <source>
        <tissue>Blood</tissue>
    </source>
</reference>
<comment type="subcellular location">
    <subcellularLocation>
        <location evidence="1">Nucleus</location>
    </subcellularLocation>
</comment>